<comment type="function">
    <text evidence="1">May play a role in DNA repair. It seems to be involved in an RecBC-independent recombinational process of DNA repair. It may act with RecF and RecO.</text>
</comment>
<comment type="similarity">
    <text evidence="1">Belongs to the RecR family.</text>
</comment>
<proteinExistence type="inferred from homology"/>
<dbReference type="EMBL" id="CP000926">
    <property type="protein sequence ID" value="ABY99722.1"/>
    <property type="molecule type" value="Genomic_DNA"/>
</dbReference>
<dbReference type="RefSeq" id="WP_012273417.1">
    <property type="nucleotide sequence ID" value="NC_010322.1"/>
</dbReference>
<dbReference type="SMR" id="B0KPW7"/>
<dbReference type="KEGG" id="ppg:PputGB1_3832"/>
<dbReference type="eggNOG" id="COG0353">
    <property type="taxonomic scope" value="Bacteria"/>
</dbReference>
<dbReference type="HOGENOM" id="CLU_060739_1_2_6"/>
<dbReference type="Proteomes" id="UP000002157">
    <property type="component" value="Chromosome"/>
</dbReference>
<dbReference type="GO" id="GO:0003677">
    <property type="term" value="F:DNA binding"/>
    <property type="evidence" value="ECO:0007669"/>
    <property type="project" value="UniProtKB-UniRule"/>
</dbReference>
<dbReference type="GO" id="GO:0008270">
    <property type="term" value="F:zinc ion binding"/>
    <property type="evidence" value="ECO:0007669"/>
    <property type="project" value="UniProtKB-KW"/>
</dbReference>
<dbReference type="GO" id="GO:0006310">
    <property type="term" value="P:DNA recombination"/>
    <property type="evidence" value="ECO:0007669"/>
    <property type="project" value="UniProtKB-UniRule"/>
</dbReference>
<dbReference type="GO" id="GO:0006281">
    <property type="term" value="P:DNA repair"/>
    <property type="evidence" value="ECO:0007669"/>
    <property type="project" value="UniProtKB-UniRule"/>
</dbReference>
<dbReference type="CDD" id="cd01025">
    <property type="entry name" value="TOPRIM_recR"/>
    <property type="match status" value="1"/>
</dbReference>
<dbReference type="Gene3D" id="3.40.1360.10">
    <property type="match status" value="1"/>
</dbReference>
<dbReference type="Gene3D" id="6.10.250.240">
    <property type="match status" value="1"/>
</dbReference>
<dbReference type="Gene3D" id="1.10.8.420">
    <property type="entry name" value="RecR Domain 1"/>
    <property type="match status" value="1"/>
</dbReference>
<dbReference type="HAMAP" id="MF_00017">
    <property type="entry name" value="RecR"/>
    <property type="match status" value="1"/>
</dbReference>
<dbReference type="InterPro" id="IPR000093">
    <property type="entry name" value="DNA_Rcmb_RecR"/>
</dbReference>
<dbReference type="InterPro" id="IPR023627">
    <property type="entry name" value="Rcmb_RecR"/>
</dbReference>
<dbReference type="InterPro" id="IPR015967">
    <property type="entry name" value="Rcmb_RecR_Znf"/>
</dbReference>
<dbReference type="InterPro" id="IPR006171">
    <property type="entry name" value="TOPRIM_dom"/>
</dbReference>
<dbReference type="InterPro" id="IPR034137">
    <property type="entry name" value="TOPRIM_RecR"/>
</dbReference>
<dbReference type="NCBIfam" id="TIGR00615">
    <property type="entry name" value="recR"/>
    <property type="match status" value="1"/>
</dbReference>
<dbReference type="PANTHER" id="PTHR30446">
    <property type="entry name" value="RECOMBINATION PROTEIN RECR"/>
    <property type="match status" value="1"/>
</dbReference>
<dbReference type="PANTHER" id="PTHR30446:SF0">
    <property type="entry name" value="RECOMBINATION PROTEIN RECR"/>
    <property type="match status" value="1"/>
</dbReference>
<dbReference type="Pfam" id="PF21175">
    <property type="entry name" value="RecR_C"/>
    <property type="match status" value="1"/>
</dbReference>
<dbReference type="Pfam" id="PF21176">
    <property type="entry name" value="RecR_HhH"/>
    <property type="match status" value="1"/>
</dbReference>
<dbReference type="Pfam" id="PF02132">
    <property type="entry name" value="RecR_ZnF"/>
    <property type="match status" value="1"/>
</dbReference>
<dbReference type="Pfam" id="PF13662">
    <property type="entry name" value="Toprim_4"/>
    <property type="match status" value="1"/>
</dbReference>
<dbReference type="SMART" id="SM00493">
    <property type="entry name" value="TOPRIM"/>
    <property type="match status" value="1"/>
</dbReference>
<dbReference type="SUPFAM" id="SSF111304">
    <property type="entry name" value="Recombination protein RecR"/>
    <property type="match status" value="1"/>
</dbReference>
<dbReference type="PROSITE" id="PS01300">
    <property type="entry name" value="RECR"/>
    <property type="match status" value="1"/>
</dbReference>
<dbReference type="PROSITE" id="PS50880">
    <property type="entry name" value="TOPRIM"/>
    <property type="match status" value="1"/>
</dbReference>
<accession>B0KPW7</accession>
<feature type="chain" id="PRO_1000074126" description="Recombination protein RecR">
    <location>
        <begin position="1"/>
        <end position="200"/>
    </location>
</feature>
<feature type="domain" description="Toprim" evidence="1">
    <location>
        <begin position="80"/>
        <end position="175"/>
    </location>
</feature>
<feature type="zinc finger region" description="C4-type" evidence="1">
    <location>
        <begin position="57"/>
        <end position="72"/>
    </location>
</feature>
<gene>
    <name evidence="1" type="primary">recR</name>
    <name type="ordered locus">PputGB1_3832</name>
</gene>
<keyword id="KW-0227">DNA damage</keyword>
<keyword id="KW-0233">DNA recombination</keyword>
<keyword id="KW-0234">DNA repair</keyword>
<keyword id="KW-0479">Metal-binding</keyword>
<keyword id="KW-0862">Zinc</keyword>
<keyword id="KW-0863">Zinc-finger</keyword>
<name>RECR_PSEPG</name>
<protein>
    <recommendedName>
        <fullName evidence="1">Recombination protein RecR</fullName>
    </recommendedName>
</protein>
<sequence length="200" mass="21551">MSFSPLIRQLIDGLRILPGVGQKTAQRMALQLLERDRSGGLRLAQALTQAMEGVGHCRQCRTLTEQELCPQCADTRRDDTQLCVVEGPTDVYAVEQTGYRGRYFVLKGHLSPLDGLGPEAIGIPQLMARIEEQGTFTEVILATNPTVEGEATAHYIAQLLSEKGLAATRIAHGVPLGGELELVDGGTLAHAIAGRRPISL</sequence>
<evidence type="ECO:0000255" key="1">
    <source>
        <dbReference type="HAMAP-Rule" id="MF_00017"/>
    </source>
</evidence>
<organism>
    <name type="scientific">Pseudomonas putida (strain GB-1)</name>
    <dbReference type="NCBI Taxonomy" id="76869"/>
    <lineage>
        <taxon>Bacteria</taxon>
        <taxon>Pseudomonadati</taxon>
        <taxon>Pseudomonadota</taxon>
        <taxon>Gammaproteobacteria</taxon>
        <taxon>Pseudomonadales</taxon>
        <taxon>Pseudomonadaceae</taxon>
        <taxon>Pseudomonas</taxon>
    </lineage>
</organism>
<reference key="1">
    <citation type="submission" date="2008-01" db="EMBL/GenBank/DDBJ databases">
        <title>Complete sequence of Pseudomonas putida GB-1.</title>
        <authorList>
            <consortium name="US DOE Joint Genome Institute"/>
            <person name="Copeland A."/>
            <person name="Lucas S."/>
            <person name="Lapidus A."/>
            <person name="Barry K."/>
            <person name="Glavina del Rio T."/>
            <person name="Dalin E."/>
            <person name="Tice H."/>
            <person name="Pitluck S."/>
            <person name="Bruce D."/>
            <person name="Goodwin L."/>
            <person name="Chertkov O."/>
            <person name="Brettin T."/>
            <person name="Detter J.C."/>
            <person name="Han C."/>
            <person name="Kuske C.R."/>
            <person name="Schmutz J."/>
            <person name="Larimer F."/>
            <person name="Land M."/>
            <person name="Hauser L."/>
            <person name="Kyrpides N."/>
            <person name="Kim E."/>
            <person name="McCarthy J.K."/>
            <person name="Richardson P."/>
        </authorList>
    </citation>
    <scope>NUCLEOTIDE SEQUENCE [LARGE SCALE GENOMIC DNA]</scope>
    <source>
        <strain>GB-1</strain>
    </source>
</reference>